<keyword id="KW-0539">Nucleus</keyword>
<keyword id="KW-1185">Reference proteome</keyword>
<comment type="function">
    <text evidence="2">Probable component of transcriptional regulatory complex with SMAD protein daf-3 (PubMed:14681186). Required to regulate entry into a developmentally arrested larval state known as dauer, in response to harsh environmental conditions (PubMed:14681186). Involved in larvae undergoing cell-cycle arrest during the dauer stage (PubMed:14681186).</text>
</comment>
<comment type="subunit">
    <text evidence="2">May interact with daf-3.</text>
</comment>
<comment type="interaction">
    <interactant intactId="EBI-360260">
        <id>G5EDM7</id>
    </interactant>
    <interactant intactId="EBI-326363">
        <id>Q95QI7</id>
        <label>daf-3</label>
    </interactant>
    <organismsDiffer>false</organismsDiffer>
    <experiments>4</experiments>
</comment>
<comment type="subcellular location">
    <subcellularLocation>
        <location evidence="2">Nucleus</location>
    </subcellularLocation>
</comment>
<comment type="tissue specificity">
    <text evidence="2">Expressed in ganglia in the head and tail and in the anterior pharynx.</text>
</comment>
<comment type="similarity">
    <text evidence="4">Belongs to the SKI family.</text>
</comment>
<dbReference type="EMBL" id="AY438643">
    <property type="protein sequence ID" value="AAR00670.1"/>
    <property type="molecule type" value="mRNA"/>
</dbReference>
<dbReference type="EMBL" id="BX284602">
    <property type="protein sequence ID" value="CAB03453.1"/>
    <property type="molecule type" value="Genomic_DNA"/>
</dbReference>
<dbReference type="PIR" id="T26064">
    <property type="entry name" value="T26064"/>
</dbReference>
<dbReference type="RefSeq" id="NP_496941.1">
    <property type="nucleotide sequence ID" value="NM_064540.7"/>
</dbReference>
<dbReference type="FunCoup" id="G5EDM7">
    <property type="interactions" value="1306"/>
</dbReference>
<dbReference type="IntAct" id="G5EDM7">
    <property type="interactions" value="1"/>
</dbReference>
<dbReference type="STRING" id="6239.W01G7.1.1"/>
<dbReference type="PaxDb" id="6239-W01G7.1"/>
<dbReference type="EnsemblMetazoa" id="W01G7.1.1">
    <property type="protein sequence ID" value="W01G7.1.1"/>
    <property type="gene ID" value="WBGene00000901"/>
</dbReference>
<dbReference type="EnsemblMetazoa" id="W01G7.1.2">
    <property type="protein sequence ID" value="W01G7.1.2"/>
    <property type="gene ID" value="WBGene00000901"/>
</dbReference>
<dbReference type="GeneID" id="175054"/>
<dbReference type="KEGG" id="cel:CELE_W01G7.1"/>
<dbReference type="AGR" id="WB:WBGene00000901"/>
<dbReference type="CTD" id="175054"/>
<dbReference type="WormBase" id="W01G7.1">
    <property type="protein sequence ID" value="CE18985"/>
    <property type="gene ID" value="WBGene00000901"/>
    <property type="gene designation" value="daf-5"/>
</dbReference>
<dbReference type="eggNOG" id="ENOG502TFH6">
    <property type="taxonomic scope" value="Eukaryota"/>
</dbReference>
<dbReference type="HOGENOM" id="CLU_385063_0_0_1"/>
<dbReference type="InParanoid" id="G5EDM7"/>
<dbReference type="OMA" id="GYWYKNR"/>
<dbReference type="OrthoDB" id="3938623at2759"/>
<dbReference type="SignaLink" id="G5EDM7"/>
<dbReference type="PRO" id="PR:G5EDM7"/>
<dbReference type="Proteomes" id="UP000001940">
    <property type="component" value="Chromosome II"/>
</dbReference>
<dbReference type="Bgee" id="WBGene00000901">
    <property type="expression patterns" value="Expressed in pharyngeal muscle cell (C elegans) and 4 other cell types or tissues"/>
</dbReference>
<dbReference type="GO" id="GO:0005737">
    <property type="term" value="C:cytoplasm"/>
    <property type="evidence" value="ECO:0000314"/>
    <property type="project" value="WormBase"/>
</dbReference>
<dbReference type="GO" id="GO:0005634">
    <property type="term" value="C:nucleus"/>
    <property type="evidence" value="ECO:0000314"/>
    <property type="project" value="WormBase"/>
</dbReference>
<dbReference type="GO" id="GO:0005667">
    <property type="term" value="C:transcription regulator complex"/>
    <property type="evidence" value="ECO:0000318"/>
    <property type="project" value="GO_Central"/>
</dbReference>
<dbReference type="GO" id="GO:0000981">
    <property type="term" value="F:DNA-binding transcription factor activity, RNA polymerase II-specific"/>
    <property type="evidence" value="ECO:0000318"/>
    <property type="project" value="GO_Central"/>
</dbReference>
<dbReference type="GO" id="GO:0000978">
    <property type="term" value="F:RNA polymerase II cis-regulatory region sequence-specific DNA binding"/>
    <property type="evidence" value="ECO:0000318"/>
    <property type="project" value="GO_Central"/>
</dbReference>
<dbReference type="GO" id="GO:0046332">
    <property type="term" value="F:SMAD binding"/>
    <property type="evidence" value="ECO:0000318"/>
    <property type="project" value="GO_Central"/>
</dbReference>
<dbReference type="GO" id="GO:0040024">
    <property type="term" value="P:dauer larval development"/>
    <property type="evidence" value="ECO:0000316"/>
    <property type="project" value="WormBase"/>
</dbReference>
<dbReference type="GO" id="GO:0008340">
    <property type="term" value="P:determination of adult lifespan"/>
    <property type="evidence" value="ECO:0000315"/>
    <property type="project" value="WormBase"/>
</dbReference>
<dbReference type="GO" id="GO:0030514">
    <property type="term" value="P:negative regulation of BMP signaling pathway"/>
    <property type="evidence" value="ECO:0000318"/>
    <property type="project" value="GO_Central"/>
</dbReference>
<dbReference type="GO" id="GO:0000122">
    <property type="term" value="P:negative regulation of transcription by RNA polymerase II"/>
    <property type="evidence" value="ECO:0000316"/>
    <property type="project" value="WormBase"/>
</dbReference>
<dbReference type="GO" id="GO:0061066">
    <property type="term" value="P:positive regulation of dauer larval development"/>
    <property type="evidence" value="ECO:0000315"/>
    <property type="project" value="WormBase"/>
</dbReference>
<dbReference type="GO" id="GO:0007179">
    <property type="term" value="P:transforming growth factor beta receptor signaling pathway"/>
    <property type="evidence" value="ECO:0000316"/>
    <property type="project" value="WormBase"/>
</dbReference>
<dbReference type="FunFam" id="3.10.390.10:FF:000008">
    <property type="entry name" value="Abnormal DAuer Formation DAF-5, a Ski oncogene homolog involved in a neuronal TGF beta pathway (71.0 kD) (Daf-5)"/>
    <property type="match status" value="1"/>
</dbReference>
<dbReference type="Gene3D" id="3.10.390.10">
    <property type="entry name" value="SAND domain-like"/>
    <property type="match status" value="1"/>
</dbReference>
<dbReference type="InterPro" id="IPR014890">
    <property type="entry name" value="c-SKI_SMAD4-bd_dom"/>
</dbReference>
<dbReference type="InterPro" id="IPR010919">
    <property type="entry name" value="SAND-like_dom_sf"/>
</dbReference>
<dbReference type="InterPro" id="IPR023216">
    <property type="entry name" value="Tscrpt_reg_SKI_SnoN"/>
</dbReference>
<dbReference type="PANTHER" id="PTHR10005:SF26">
    <property type="entry name" value="CORL"/>
    <property type="match status" value="1"/>
</dbReference>
<dbReference type="PANTHER" id="PTHR10005">
    <property type="entry name" value="SKI ONCOGENE-RELATED"/>
    <property type="match status" value="1"/>
</dbReference>
<dbReference type="Pfam" id="PF08782">
    <property type="entry name" value="c-SKI_SMAD_bind"/>
    <property type="match status" value="1"/>
</dbReference>
<dbReference type="SUPFAM" id="SSF63763">
    <property type="entry name" value="SAND domain-like"/>
    <property type="match status" value="1"/>
</dbReference>
<protein>
    <recommendedName>
        <fullName evidence="3">Ski protein homolog</fullName>
    </recommendedName>
    <alternativeName>
        <fullName evidence="7">Abnormal dauer formation protein 5</fullName>
    </alternativeName>
</protein>
<feature type="chain" id="PRO_0000452406" description="Ski protein homolog">
    <location>
        <begin position="1"/>
        <end position="627"/>
    </location>
</feature>
<feature type="region of interest" description="Disordered" evidence="1">
    <location>
        <begin position="1"/>
        <end position="22"/>
    </location>
</feature>
<feature type="region of interest" description="Disordered" evidence="1">
    <location>
        <begin position="34"/>
        <end position="58"/>
    </location>
</feature>
<feature type="region of interest" description="Disordered" evidence="1">
    <location>
        <begin position="299"/>
        <end position="318"/>
    </location>
</feature>
<feature type="compositionally biased region" description="Polar residues" evidence="1">
    <location>
        <begin position="1"/>
        <end position="12"/>
    </location>
</feature>
<feature type="mutagenesis site" description="In sa310; suppression of constitutive dauer formation phenotype on a daf-8; daf-14 double mutant background." evidence="2">
    <original>E</original>
    <variation>K</variation>
    <location>
        <position position="162"/>
    </location>
</feature>
<proteinExistence type="evidence at protein level"/>
<sequence>MSDSPIGSSQQVEPEHRTPDLMDIDPLIANLKALHEETRSDDDDDGQPSTSAKRKDSRADGIVIHQKKYSDPGRFLWIWLLGVRVPALSIDGEPHLPIEILDDMLTKKDKKDQMSFQNLLRYKNVYIRMASPSQFRAVMEKSKECENLNITSLSLMSRSDIERIMGELRLESMLTLAEHDNWDISDRVHVVHVNFIDYCSEWLESDDLEEDVMQSGTHGYWYKNRRNMRCIECQHCEGKFTPTDFIMHHHYPIKPSGFVHTGCNSFQWIRLIEVFDKSNENLEAWNKFVLNSHRAGKREYDEAAPHQAPPKRPAMETPVPVAADNGWEADEEEEGEEIVDRDADIEKCKLRNKKKMENLHIADFLGPSGSKGLKPRNKFEAVIIEQLNKMDDAALEALFLKSPEEYNLWVKESDFTHKVVTQQQEWKAKMKDPNFKSRASANFDVSKGEFDNMRHFDNASKATRQEIQQLAEQFANLDRDAKLLTPMEFVLREHALLKNVSADAIRVLCNRPPLPPLPPPPPPPKPKPAPVQPISLGNINFVALAQQLIASGIKLPLPIVTPPVVSTPAPVITPIPAALPISPNSDFLKQQLSTAMSSPALLSLYPKLTAGAYEQLAQFIKTTTVKN</sequence>
<name>DAF5_CAEEL</name>
<evidence type="ECO:0000256" key="1">
    <source>
        <dbReference type="SAM" id="MobiDB-lite"/>
    </source>
</evidence>
<evidence type="ECO:0000269" key="2">
    <source>
    </source>
</evidence>
<evidence type="ECO:0000303" key="3">
    <source>
    </source>
</evidence>
<evidence type="ECO:0000305" key="4"/>
<evidence type="ECO:0000312" key="5">
    <source>
        <dbReference type="EMBL" id="AAR00670.1"/>
    </source>
</evidence>
<evidence type="ECO:0000312" key="6">
    <source>
        <dbReference type="Proteomes" id="UP000001940"/>
    </source>
</evidence>
<evidence type="ECO:0000312" key="7">
    <source>
        <dbReference type="WormBase" id="W01G7.1"/>
    </source>
</evidence>
<organism evidence="6">
    <name type="scientific">Caenorhabditis elegans</name>
    <dbReference type="NCBI Taxonomy" id="6239"/>
    <lineage>
        <taxon>Eukaryota</taxon>
        <taxon>Metazoa</taxon>
        <taxon>Ecdysozoa</taxon>
        <taxon>Nematoda</taxon>
        <taxon>Chromadorea</taxon>
        <taxon>Rhabditida</taxon>
        <taxon>Rhabditina</taxon>
        <taxon>Rhabditomorpha</taxon>
        <taxon>Rhabditoidea</taxon>
        <taxon>Rhabditidae</taxon>
        <taxon>Peloderinae</taxon>
        <taxon>Caenorhabditis</taxon>
    </lineage>
</organism>
<reference evidence="5" key="1">
    <citation type="journal article" date="2004" name="Development">
        <title>DAF-5 is a Ski oncoprotein homolog that functions in a neuronal TGF beta pathway to regulate C. elegans dauer development.</title>
        <authorList>
            <person name="da Graca L.S."/>
            <person name="Zimmerman K.K."/>
            <person name="Mitchell M.C."/>
            <person name="Kozhan-Gorodetska M."/>
            <person name="Sekiewicz K."/>
            <person name="Morales Y."/>
            <person name="Patterson G.I."/>
        </authorList>
    </citation>
    <scope>NUCLEOTIDE SEQUENCE [MRNA]</scope>
    <scope>FUNCTION</scope>
    <scope>INTERACTION WITH DAF-3</scope>
    <scope>SUBCELLULAR LOCATION</scope>
    <scope>TISSUE SPECIFICITY</scope>
    <scope>MUTAGENESIS OF GLU-162</scope>
</reference>
<reference evidence="6" key="2">
    <citation type="journal article" date="1998" name="Science">
        <title>Genome sequence of the nematode C. elegans: a platform for investigating biology.</title>
        <authorList>
            <consortium name="The C. elegans sequencing consortium"/>
        </authorList>
    </citation>
    <scope>NUCLEOTIDE SEQUENCE [LARGE SCALE GENOMIC DNA]</scope>
    <source>
        <strain evidence="6">Bristol N2</strain>
    </source>
</reference>
<accession>G5EDM7</accession>
<gene>
    <name evidence="7" type="primary">daf-5</name>
    <name evidence="7" type="ORF">W01G7.1</name>
</gene>